<accession>A7VJC2</accession>
<accession>A7VJC1</accession>
<accession>A7VJC3</accession>
<accession>A7VJC4</accession>
<comment type="function">
    <text evidence="2 6 8 11 13">Heterogeneous nuclear ribonucleoprotein (hnRNP) that associates with nascent pre-mRNAs, packaging them into hnRNP particles. The hnRNP particle arrangement on nascent hnRNA is non-random and sequence-dependent and serves to condense and stabilize the transcripts and minimize tangling and knotting. Packaging plays a role in various processes such as transcription, pre-mRNA processing, RNA nuclear export, subcellular location, mRNA translation and stability of mature mRNAs. Forms hnRNP particles with at least 20 other different hnRNP and heterogeneous nuclear RNA in the nucleus (PubMed:19099192). Involved in transport of specific mRNAs to the cytoplasm in oligodendrocytes and neurons: acts by specifically recognizing and binding the A2RE (21 nucleotide hnRNP A2 response element) or the A2RE11 (derivative 11 nucleotide oligonucleotide) sequence motifs present on some mRNAs, and promotes their transport to the cytoplasm (PubMed:10567417, PubMed:9578590). Specifically binds single-stranded telomeric DNA sequences, protecting telomeric DNA repeat against endonuclease digestion (PubMed:15659580). Also binds other RNA molecules, such as primary miRNA (pri-miRNAs): acts as a nuclear 'reader' of the N6-methyladenosine (m6A) mark by specifically recognizing and binding a subset of nuclear m6A-containing pri-miRNAs. Binding to m6A-containing pri-miRNAs promotes pri-miRNA processing by enhancing binding of DGCR8 to pri-miRNA transcripts. Involved in miRNA sorting into exosomes following sumoylation, possibly by binding (m6A)-containing pre-miRNAs. Acts as a regulator of efficiency of mRNA splicing, possibly by binding to m6A-containing pre-mRNAs. Plays a role in the splicing of pyruvate kinase PKM by binding repressively to sequences flanking PKM exon 9, inhibiting exon 9 inclusion and resulting in exon 10 inclusion and production of the PKM M2 isoform (By similarity). Also plays a role in the activation of the innate immune response. Mechanistically, senses the presence of viral DNA in the nucleus, homodimerizes and is demethylated by JMJD6. In turn, translocates to the cytoplasm where it activates the TBK1-IRF3 pathway, leading to interferon alpha/beta production (By similarity).</text>
</comment>
<comment type="subunit">
    <text evidence="2">Homodimer; dimerization is required for nucleocytoplasmic translocation. Identified in the spliceosome C complex. Identified in a IGF2BP1-dependent mRNP granule complex containing untranslated mRNAs. Interacts with IGF2BP1. Interacts with C9orf72. Interacts with DGCR8. Interacts with TARDBP. Interacts with CKAP5. Interacts with TBK1. Interacts with STING1. Interacts with SRC (By similarity). Interacts with PPIA/CYPA (By similarity). Interacts (via C-terminus) with FAM76B; the interaction results in retention of HNRNPA2B1 in the nucleus and inhibition of the NF-kappa-B-mediated inflammatory pathway (By similarity). Interacts with NF-kappa-B inhibitors NFKBIA and NFKBIE; the interaction may be mediated by the RRM2 domain of HNRNPA2B1, and HNRNPA2B1 may interact simultaneously with FAM76B and either NFKBIA or NFKBIE to form a complex (By similarity).</text>
</comment>
<comment type="subcellular location">
    <molecule>Isoform B1</molecule>
    <subcellularLocation>
        <location evidence="9">Nucleus</location>
    </subcellularLocation>
</comment>
<comment type="subcellular location">
    <molecule>Isoform A2</molecule>
    <subcellularLocation>
        <location evidence="9 10">Nucleus</location>
    </subcellularLocation>
</comment>
<comment type="subcellular location">
    <molecule>Isoform A2b</molecule>
    <subcellularLocation>
        <location evidence="9">Cytoplasm</location>
    </subcellularLocation>
    <subcellularLocation>
        <location evidence="9">Nucleus</location>
    </subcellularLocation>
    <text evidence="9">Mainly localizes in the cytoplasm in neural cells.</text>
</comment>
<comment type="subcellular location">
    <molecule>Isoform B1b</molecule>
    <subcellularLocation>
        <location evidence="9">Cytoplasm</location>
    </subcellularLocation>
    <subcellularLocation>
        <location evidence="9">Nucleus</location>
    </subcellularLocation>
</comment>
<comment type="subcellular location">
    <subcellularLocation>
        <location evidence="2">Nucleus</location>
    </subcellularLocation>
    <subcellularLocation>
        <location evidence="11 12">Nucleus</location>
        <location evidence="11 12">Nucleoplasm</location>
    </subcellularLocation>
    <subcellularLocation>
        <location evidence="12">Cytoplasm</location>
    </subcellularLocation>
    <subcellularLocation>
        <location evidence="2">Cytoplasmic granule</location>
    </subcellularLocation>
    <subcellularLocation>
        <location evidence="2">Secreted</location>
        <location evidence="2">Extracellular exosome</location>
    </subcellularLocation>
    <text evidence="2">Localized in cytoplasmic mRNP granules containing untranslated mRNAs. Component of ribonucleosomes. Not found in the nucleolus. Found in exosomes following sumoylation.</text>
</comment>
<comment type="alternative products">
    <event type="alternative splicing"/>
    <isoform>
        <id>A7VJC2-1</id>
        <name evidence="14">B1</name>
        <sequence type="displayed"/>
    </isoform>
    <isoform>
        <id>A7VJC2-2</id>
        <name evidence="14">A2</name>
        <sequence type="described" ref="VSP_053031"/>
    </isoform>
    <isoform>
        <id>A7VJC2-3</id>
        <name>A2b</name>
        <name evidence="14">B0a</name>
        <sequence type="described" ref="VSP_053031 VSP_053032"/>
    </isoform>
    <isoform>
        <id>A7VJC2-4</id>
        <name>B1b</name>
        <name evidence="14">B0b</name>
        <sequence type="described" ref="VSP_053032"/>
    </isoform>
    <text evidence="12">Additional isoforms seem to exist.</text>
</comment>
<comment type="tissue specificity">
    <text evidence="12">In the brain, isoform A2 and isoform B1 are abundant in large ganglion-type neurons, such as Purkinje cells, and are less abundant in neighboring glia cells. Isoform A2 is more abundant than isoform B1 in brain. In testis, isoform A2 and isoform B1 are present in spermatogonia and spermatocytes, but not in spermatids or sperm. Isoform A2 is more abundant in the adrenal medulla than in the cortical cells. Isoform B1 is found in both adrenal medulla and cortical cells. Isoform A2 is more abundant than isoform B1 in the adrenal gland. Isoform A2 and isoform B1 are both detected in pancreas and kidney, and at lower levels in heart and lung. Isoform B1 is more abundant than isoform A2 in heart, lung and intestine (at protein level). Isoform A2b and isoform B1b are testis-specific.</text>
</comment>
<comment type="domain">
    <text evidence="2">The disordered region, when incubated at high concentration, is able to polymerize into labile, amyloid-like fibers and form cross-beta polymerization structures, probably driving the formation of hydrogels. In contrast to irreversible, pathogenic amyloids, the fibers polymerized from LC regions disassemble upon dilution. A number of evidence suggests that formation of cross-beta structures by LC regions mediate the formation of RNA granules, liquid-like droplets, and hydrogels.</text>
</comment>
<comment type="PTM">
    <text evidence="7 10">Asymmetric dimethylation at Arg-266 constitutes the major methylation site (PubMed:24098712). According to a report, methylation affects subcellular location and promotes nuclear localization (PubMed:10772824). According to another report, methylation at Arg-266 does not influence nucleocytoplasmic shuttling (PubMed:24098712).</text>
</comment>
<comment type="PTM">
    <text evidence="2">Sumoylated in exosomes, promoting miRNAs-binding.</text>
</comment>
<gene>
    <name evidence="2" type="primary">Hnrnpa2b1</name>
    <name evidence="15" type="synonym">Hnrnp</name>
    <name evidence="2" type="synonym">Hnrpa2b1</name>
</gene>
<organism>
    <name type="scientific">Rattus norvegicus</name>
    <name type="common">Rat</name>
    <dbReference type="NCBI Taxonomy" id="10116"/>
    <lineage>
        <taxon>Eukaryota</taxon>
        <taxon>Metazoa</taxon>
        <taxon>Chordata</taxon>
        <taxon>Craniata</taxon>
        <taxon>Vertebrata</taxon>
        <taxon>Euteleostomi</taxon>
        <taxon>Mammalia</taxon>
        <taxon>Eutheria</taxon>
        <taxon>Euarchontoglires</taxon>
        <taxon>Glires</taxon>
        <taxon>Rodentia</taxon>
        <taxon>Myomorpha</taxon>
        <taxon>Muroidea</taxon>
        <taxon>Muridae</taxon>
        <taxon>Murinae</taxon>
        <taxon>Rattus</taxon>
    </lineage>
</organism>
<dbReference type="EMBL" id="AB006815">
    <property type="protein sequence ID" value="BAF79675.1"/>
    <property type="molecule type" value="mRNA"/>
</dbReference>
<dbReference type="EMBL" id="AB006816">
    <property type="protein sequence ID" value="BAF79676.1"/>
    <property type="molecule type" value="mRNA"/>
</dbReference>
<dbReference type="EMBL" id="AB006817">
    <property type="protein sequence ID" value="BAF79677.1"/>
    <property type="molecule type" value="mRNA"/>
</dbReference>
<dbReference type="EMBL" id="AB006818">
    <property type="protein sequence ID" value="BAF79678.1"/>
    <property type="molecule type" value="mRNA"/>
</dbReference>
<dbReference type="RefSeq" id="NP_001098083.1">
    <property type="nucleotide sequence ID" value="NM_001104613.1"/>
</dbReference>
<dbReference type="SMR" id="A7VJC2"/>
<dbReference type="BioGRID" id="263391">
    <property type="interactions" value="7"/>
</dbReference>
<dbReference type="FunCoup" id="A7VJC2">
    <property type="interactions" value="3961"/>
</dbReference>
<dbReference type="IntAct" id="A7VJC2">
    <property type="interactions" value="7"/>
</dbReference>
<dbReference type="MINT" id="A7VJC2"/>
<dbReference type="STRING" id="10116.ENSRNOP00000015152"/>
<dbReference type="GlyGen" id="A7VJC2">
    <property type="glycosylation" value="1 site, 1 O-linked glycan (1 site)"/>
</dbReference>
<dbReference type="iPTMnet" id="A7VJC2"/>
<dbReference type="PhosphoSitePlus" id="A7VJC2"/>
<dbReference type="SwissPalm" id="A7VJC2"/>
<dbReference type="jPOST" id="A7VJC2"/>
<dbReference type="PaxDb" id="10116-ENSRNOP00000015152"/>
<dbReference type="PeptideAtlas" id="A7VJC2"/>
<dbReference type="GeneID" id="362361"/>
<dbReference type="KEGG" id="rno:362361"/>
<dbReference type="UCSC" id="RGD:1310403">
    <molecule id="A7VJC2-1"/>
    <property type="organism name" value="rat"/>
</dbReference>
<dbReference type="AGR" id="RGD:1310403"/>
<dbReference type="CTD" id="3181"/>
<dbReference type="RGD" id="1310403">
    <property type="gene designation" value="Hnrnpa2b1"/>
</dbReference>
<dbReference type="eggNOG" id="KOG0118">
    <property type="taxonomic scope" value="Eukaryota"/>
</dbReference>
<dbReference type="InParanoid" id="A7VJC2"/>
<dbReference type="PhylomeDB" id="A7VJC2"/>
<dbReference type="Reactome" id="R-RNO-72163">
    <property type="pathway name" value="mRNA Splicing - Major Pathway"/>
</dbReference>
<dbReference type="Reactome" id="R-RNO-72203">
    <property type="pathway name" value="Processing of Capped Intron-Containing Pre-mRNA"/>
</dbReference>
<dbReference type="CD-CODE" id="1E07FF65">
    <property type="entry name" value="Neuronal RNP granule"/>
</dbReference>
<dbReference type="PRO" id="PR:A7VJC2"/>
<dbReference type="Proteomes" id="UP000002494">
    <property type="component" value="Unplaced"/>
</dbReference>
<dbReference type="GO" id="GO:0015030">
    <property type="term" value="C:Cajal body"/>
    <property type="evidence" value="ECO:0000314"/>
    <property type="project" value="BHF-UCL"/>
</dbReference>
<dbReference type="GO" id="GO:0071013">
    <property type="term" value="C:catalytic step 2 spliceosome"/>
    <property type="evidence" value="ECO:0000266"/>
    <property type="project" value="RGD"/>
</dbReference>
<dbReference type="GO" id="GO:0000785">
    <property type="term" value="C:chromatin"/>
    <property type="evidence" value="ECO:0000314"/>
    <property type="project" value="RGD"/>
</dbReference>
<dbReference type="GO" id="GO:0000781">
    <property type="term" value="C:chromosome, telomeric region"/>
    <property type="evidence" value="ECO:0000314"/>
    <property type="project" value="BHF-UCL"/>
</dbReference>
<dbReference type="GO" id="GO:0005737">
    <property type="term" value="C:cytoplasm"/>
    <property type="evidence" value="ECO:0000266"/>
    <property type="project" value="RGD"/>
</dbReference>
<dbReference type="GO" id="GO:0070062">
    <property type="term" value="C:extracellular exosome"/>
    <property type="evidence" value="ECO:0000250"/>
    <property type="project" value="UniProtKB"/>
</dbReference>
<dbReference type="GO" id="GO:0098978">
    <property type="term" value="C:glutamatergic synapse"/>
    <property type="evidence" value="ECO:0000314"/>
    <property type="project" value="SynGO"/>
</dbReference>
<dbReference type="GO" id="GO:0043025">
    <property type="term" value="C:neuronal cell body"/>
    <property type="evidence" value="ECO:0000314"/>
    <property type="project" value="RGD"/>
</dbReference>
<dbReference type="GO" id="GO:0071598">
    <property type="term" value="C:neuronal ribonucleoprotein granule"/>
    <property type="evidence" value="ECO:0000314"/>
    <property type="project" value="RGD"/>
</dbReference>
<dbReference type="GO" id="GO:0016363">
    <property type="term" value="C:nuclear matrix"/>
    <property type="evidence" value="ECO:0000314"/>
    <property type="project" value="BHF-UCL"/>
</dbReference>
<dbReference type="GO" id="GO:0005634">
    <property type="term" value="C:nucleus"/>
    <property type="evidence" value="ECO:0000314"/>
    <property type="project" value="UniProtKB"/>
</dbReference>
<dbReference type="GO" id="GO:0043204">
    <property type="term" value="C:perikaryon"/>
    <property type="evidence" value="ECO:0000314"/>
    <property type="project" value="RGD"/>
</dbReference>
<dbReference type="GO" id="GO:0099524">
    <property type="term" value="C:postsynaptic cytosol"/>
    <property type="evidence" value="ECO:0000314"/>
    <property type="project" value="SynGO"/>
</dbReference>
<dbReference type="GO" id="GO:0014069">
    <property type="term" value="C:postsynaptic density"/>
    <property type="evidence" value="ECO:0000314"/>
    <property type="project" value="SynGO"/>
</dbReference>
<dbReference type="GO" id="GO:1990904">
    <property type="term" value="C:ribonucleoprotein complex"/>
    <property type="evidence" value="ECO:0000250"/>
    <property type="project" value="UniProtKB"/>
</dbReference>
<dbReference type="GO" id="GO:0005681">
    <property type="term" value="C:spliceosomal complex"/>
    <property type="evidence" value="ECO:0000266"/>
    <property type="project" value="RGD"/>
</dbReference>
<dbReference type="GO" id="GO:0070182">
    <property type="term" value="F:DNA polymerase binding"/>
    <property type="evidence" value="ECO:0000353"/>
    <property type="project" value="BHF-UCL"/>
</dbReference>
<dbReference type="GO" id="GO:0098505">
    <property type="term" value="F:G-rich strand telomeric DNA binding"/>
    <property type="evidence" value="ECO:0000314"/>
    <property type="project" value="BHF-UCL"/>
</dbReference>
<dbReference type="GO" id="GO:0035198">
    <property type="term" value="F:miRNA binding"/>
    <property type="evidence" value="ECO:0000250"/>
    <property type="project" value="UniProtKB"/>
</dbReference>
<dbReference type="GO" id="GO:0140693">
    <property type="term" value="F:molecular condensate scaffold activity"/>
    <property type="evidence" value="ECO:0000266"/>
    <property type="project" value="RGD"/>
</dbReference>
<dbReference type="GO" id="GO:0003730">
    <property type="term" value="F:mRNA 3'-UTR binding"/>
    <property type="evidence" value="ECO:0000314"/>
    <property type="project" value="UniProtKB"/>
</dbReference>
<dbReference type="GO" id="GO:1990715">
    <property type="term" value="F:mRNA CDS binding"/>
    <property type="evidence" value="ECO:0000314"/>
    <property type="project" value="RGD"/>
</dbReference>
<dbReference type="GO" id="GO:1990247">
    <property type="term" value="F:N6-methyladenosine-containing RNA reader activity"/>
    <property type="evidence" value="ECO:0000250"/>
    <property type="project" value="UniProtKB"/>
</dbReference>
<dbReference type="GO" id="GO:0097157">
    <property type="term" value="F:pre-mRNA intronic binding"/>
    <property type="evidence" value="ECO:0000266"/>
    <property type="project" value="RGD"/>
</dbReference>
<dbReference type="GO" id="GO:0001069">
    <property type="term" value="F:regulatory region RNA binding"/>
    <property type="evidence" value="ECO:0000314"/>
    <property type="project" value="RGD"/>
</dbReference>
<dbReference type="GO" id="GO:0003723">
    <property type="term" value="F:RNA binding"/>
    <property type="evidence" value="ECO:0000314"/>
    <property type="project" value="RGD"/>
</dbReference>
<dbReference type="GO" id="GO:0043047">
    <property type="term" value="F:single-stranded telomeric DNA binding"/>
    <property type="evidence" value="ECO:0000314"/>
    <property type="project" value="UniProtKB"/>
</dbReference>
<dbReference type="GO" id="GO:0032392">
    <property type="term" value="P:DNA geometric change"/>
    <property type="evidence" value="ECO:0000314"/>
    <property type="project" value="BHF-UCL"/>
</dbReference>
<dbReference type="GO" id="GO:0030324">
    <property type="term" value="P:lung development"/>
    <property type="evidence" value="ECO:0000270"/>
    <property type="project" value="RGD"/>
</dbReference>
<dbReference type="GO" id="GO:0008584">
    <property type="term" value="P:male gonad development"/>
    <property type="evidence" value="ECO:0000270"/>
    <property type="project" value="RGD"/>
</dbReference>
<dbReference type="GO" id="GO:1990428">
    <property type="term" value="P:miRNA transport"/>
    <property type="evidence" value="ECO:0000250"/>
    <property type="project" value="UniProtKB"/>
</dbReference>
<dbReference type="GO" id="GO:0006406">
    <property type="term" value="P:mRNA export from nucleus"/>
    <property type="evidence" value="ECO:0000314"/>
    <property type="project" value="UniProtKB"/>
</dbReference>
<dbReference type="GO" id="GO:0006397">
    <property type="term" value="P:mRNA processing"/>
    <property type="evidence" value="ECO:0000266"/>
    <property type="project" value="RGD"/>
</dbReference>
<dbReference type="GO" id="GO:0000398">
    <property type="term" value="P:mRNA splicing, via spliceosome"/>
    <property type="evidence" value="ECO:0000250"/>
    <property type="project" value="UniProtKB"/>
</dbReference>
<dbReference type="GO" id="GO:0051028">
    <property type="term" value="P:mRNA transport"/>
    <property type="evidence" value="ECO:0000318"/>
    <property type="project" value="GO_Central"/>
</dbReference>
<dbReference type="GO" id="GO:0048025">
    <property type="term" value="P:negative regulation of mRNA splicing, via spliceosome"/>
    <property type="evidence" value="ECO:0000266"/>
    <property type="project" value="RGD"/>
</dbReference>
<dbReference type="GO" id="GO:0000122">
    <property type="term" value="P:negative regulation of transcription by RNA polymerase II"/>
    <property type="evidence" value="ECO:0000266"/>
    <property type="project" value="RGD"/>
</dbReference>
<dbReference type="GO" id="GO:0048709">
    <property type="term" value="P:oligodendrocyte differentiation"/>
    <property type="evidence" value="ECO:0000270"/>
    <property type="project" value="RGD"/>
</dbReference>
<dbReference type="GO" id="GO:1904358">
    <property type="term" value="P:positive regulation of telomere maintenance via telomere lengthening"/>
    <property type="evidence" value="ECO:0000314"/>
    <property type="project" value="BHF-UCL"/>
</dbReference>
<dbReference type="GO" id="GO:0031053">
    <property type="term" value="P:primary miRNA processing"/>
    <property type="evidence" value="ECO:0000250"/>
    <property type="project" value="UniProtKB"/>
</dbReference>
<dbReference type="GO" id="GO:0051385">
    <property type="term" value="P:response to mineralocorticoid"/>
    <property type="evidence" value="ECO:0000270"/>
    <property type="project" value="RGD"/>
</dbReference>
<dbReference type="GO" id="GO:0050658">
    <property type="term" value="P:RNA transport"/>
    <property type="evidence" value="ECO:0000315"/>
    <property type="project" value="RGD"/>
</dbReference>
<dbReference type="GO" id="GO:0016233">
    <property type="term" value="P:telomere capping"/>
    <property type="evidence" value="ECO:0000314"/>
    <property type="project" value="UniProtKB"/>
</dbReference>
<dbReference type="CDD" id="cd12762">
    <property type="entry name" value="RRM1_hnRNPA2B1"/>
    <property type="match status" value="1"/>
</dbReference>
<dbReference type="CDD" id="cd12581">
    <property type="entry name" value="RRM2_hnRNPA2B1"/>
    <property type="match status" value="1"/>
</dbReference>
<dbReference type="FunFam" id="3.30.70.330:FF:000040">
    <property type="entry name" value="Heterogeneous nuclear ribonucleoprotein A2/B1"/>
    <property type="match status" value="1"/>
</dbReference>
<dbReference type="FunFam" id="3.30.70.330:FF:000108">
    <property type="entry name" value="Heterogeneous nuclear ribonucleoproteins A2/B1"/>
    <property type="match status" value="1"/>
</dbReference>
<dbReference type="Gene3D" id="3.30.70.330">
    <property type="match status" value="2"/>
</dbReference>
<dbReference type="InterPro" id="IPR021662">
    <property type="entry name" value="HnRNPA1/A2_C"/>
</dbReference>
<dbReference type="InterPro" id="IPR034486">
    <property type="entry name" value="hnRNPA2B1_RRM1"/>
</dbReference>
<dbReference type="InterPro" id="IPR012677">
    <property type="entry name" value="Nucleotide-bd_a/b_plait_sf"/>
</dbReference>
<dbReference type="InterPro" id="IPR035979">
    <property type="entry name" value="RBD_domain_sf"/>
</dbReference>
<dbReference type="InterPro" id="IPR000504">
    <property type="entry name" value="RRM_dom"/>
</dbReference>
<dbReference type="PANTHER" id="PTHR48026:SF13">
    <property type="entry name" value="HETEROGENEOUS NUCLEAR RIBONUCLEOPROTEINS A2_B1"/>
    <property type="match status" value="1"/>
</dbReference>
<dbReference type="PANTHER" id="PTHR48026">
    <property type="entry name" value="HOMOLOGOUS TO DROSOPHILA SQD (SQUID) PROTEIN"/>
    <property type="match status" value="1"/>
</dbReference>
<dbReference type="Pfam" id="PF11627">
    <property type="entry name" value="HnRNPA1_LC"/>
    <property type="match status" value="1"/>
</dbReference>
<dbReference type="Pfam" id="PF00076">
    <property type="entry name" value="RRM_1"/>
    <property type="match status" value="2"/>
</dbReference>
<dbReference type="SMART" id="SM00360">
    <property type="entry name" value="RRM"/>
    <property type="match status" value="2"/>
</dbReference>
<dbReference type="SUPFAM" id="SSF54928">
    <property type="entry name" value="RNA-binding domain, RBD"/>
    <property type="match status" value="2"/>
</dbReference>
<dbReference type="PROSITE" id="PS50102">
    <property type="entry name" value="RRM"/>
    <property type="match status" value="2"/>
</dbReference>
<protein>
    <recommendedName>
        <fullName evidence="15">Heterogeneous nuclear ribonucleoproteins A2/B1</fullName>
        <shortName>hnRNP A2/B1</shortName>
    </recommendedName>
</protein>
<proteinExistence type="evidence at protein level"/>
<evidence type="ECO:0000250" key="1">
    <source>
        <dbReference type="UniProtKB" id="O88569"/>
    </source>
</evidence>
<evidence type="ECO:0000250" key="2">
    <source>
        <dbReference type="UniProtKB" id="P22626"/>
    </source>
</evidence>
<evidence type="ECO:0000255" key="3"/>
<evidence type="ECO:0000255" key="4">
    <source>
        <dbReference type="PROSITE-ProRule" id="PRU00176"/>
    </source>
</evidence>
<evidence type="ECO:0000256" key="5">
    <source>
        <dbReference type="SAM" id="MobiDB-lite"/>
    </source>
</evidence>
<evidence type="ECO:0000269" key="6">
    <source>
    </source>
</evidence>
<evidence type="ECO:0000269" key="7">
    <source>
    </source>
</evidence>
<evidence type="ECO:0000269" key="8">
    <source>
    </source>
</evidence>
<evidence type="ECO:0000269" key="9">
    <source>
    </source>
</evidence>
<evidence type="ECO:0000269" key="10">
    <source>
    </source>
</evidence>
<evidence type="ECO:0000269" key="11">
    <source>
    </source>
</evidence>
<evidence type="ECO:0000269" key="12">
    <source>
    </source>
</evidence>
<evidence type="ECO:0000303" key="13">
    <source>
    </source>
</evidence>
<evidence type="ECO:0000303" key="14">
    <source>
    </source>
</evidence>
<evidence type="ECO:0000312" key="15">
    <source>
        <dbReference type="EMBL" id="BAF79676.1"/>
    </source>
</evidence>
<evidence type="ECO:0007744" key="16">
    <source>
    </source>
</evidence>
<reference key="1">
    <citation type="journal article" date="1999" name="Exp. Cell Res.">
        <title>Molecular characterization of the hnRNP A2/B1 proteins: tissue-specific expression and novel isoforms.</title>
        <authorList>
            <person name="Kamma H."/>
            <person name="Horiguchi H."/>
            <person name="Wan L."/>
            <person name="Matsui M."/>
            <person name="Fuiwara M."/>
            <person name="Fujimoto M."/>
            <person name="Yazawa T."/>
            <person name="Dreyfuss G."/>
        </authorList>
    </citation>
    <scope>NUCLEOTIDE SEQUENCE [MRNA] (ISOFORMS A2; B1; A2B AND B1B)</scope>
    <scope>SUBCELLULAR LOCATION</scope>
    <scope>TISSUE SPECIFICITY</scope>
</reference>
<reference key="2">
    <citation type="journal article" date="1998" name="Biochemistry">
        <title>hnRNP A2 selectively binds the cytoplasmic transport sequence of myelin basic protein mRNA.</title>
        <authorList>
            <person name="Hoek K.S."/>
            <person name="Kidd G.J."/>
            <person name="Carson J.H."/>
            <person name="Smith R."/>
        </authorList>
    </citation>
    <scope>PROTEIN SEQUENCE OF 100-113; 116-137 AND 2014-226</scope>
    <scope>FUNCTION</scope>
    <scope>RNA-BINDING</scope>
    <scope>SUBCELLULAR LOCATION</scope>
</reference>
<reference key="3">
    <citation type="journal article" date="1999" name="J. Biol. Chem.">
        <title>Mutational analysis of a heterogeneous nuclear ribonucleoprotein A2 response element for RNA trafficking.</title>
        <authorList>
            <person name="Munro T.P."/>
            <person name="Magee R.J."/>
            <person name="Kidd G.J."/>
            <person name="Carson J.H."/>
            <person name="Barbarese E."/>
            <person name="Smith L.M."/>
            <person name="Smith R."/>
        </authorList>
    </citation>
    <scope>FUNCTION</scope>
    <scope>RNA-BINDING</scope>
</reference>
<reference key="4">
    <citation type="journal article" date="2000" name="Exp. Cell Res.">
        <title>The RGG domain in hnRNP A2 affects subcellular localization.</title>
        <authorList>
            <person name="Nichols R.C."/>
            <person name="Wang X.W."/>
            <person name="Tang J."/>
            <person name="Hamilton B.J."/>
            <person name="High F.A."/>
            <person name="Herschman H.R."/>
            <person name="Rigby W.F."/>
        </authorList>
    </citation>
    <scope>METHYLATION</scope>
</reference>
<reference key="5">
    <citation type="journal article" date="2005" name="Nucleic Acids Res.">
        <title>hnRNP A2, a potential ssDNA/RNA molecular adapter at the telomere.</title>
        <authorList>
            <person name="Moran-Jones K."/>
            <person name="Wayman L."/>
            <person name="Kennedy D.D."/>
            <person name="Reddel R.R."/>
            <person name="Sara S."/>
            <person name="Snee M.J."/>
            <person name="Smith R."/>
        </authorList>
    </citation>
    <scope>FUNCTION</scope>
</reference>
<reference key="6">
    <citation type="journal article" date="2009" name="Cell. Mol. Life Sci.">
        <title>Nuclear functions of heterogeneous nuclear ribonucleoproteins A/B.</title>
        <authorList>
            <person name="He Y."/>
            <person name="Smith R."/>
        </authorList>
    </citation>
    <scope>REVIEW</scope>
</reference>
<reference key="7">
    <citation type="journal article" date="2009" name="Proteomics">
        <title>Proteome profile of the mature rat olfactory bulb.</title>
        <authorList>
            <person name="Maurya D.K."/>
            <person name="Sundaram C.S."/>
            <person name="Bhargava P."/>
        </authorList>
    </citation>
    <scope>IDENTIFICATION BY MASS SPECTROMETRY</scope>
    <scope>SUBCELLULAR LOCATION</scope>
</reference>
<reference key="8">
    <citation type="journal article" date="2010" name="Traffic">
        <title>Differential subcellular distributions and trafficking functions of hnRNP A2/B1 spliceoforms.</title>
        <authorList>
            <person name="Han S.P."/>
            <person name="Friend L.R."/>
            <person name="Carson J.H."/>
            <person name="Korza G."/>
            <person name="Barbarese E."/>
            <person name="Maggipinto M."/>
            <person name="Hatfield J.T."/>
            <person name="Rothnagel J.A."/>
            <person name="Smith R."/>
        </authorList>
    </citation>
    <scope>SUBCELLULAR LOCATION (ISOFORMS B1; A2; A2B AND B1B)</scope>
</reference>
<reference key="9">
    <citation type="journal article" date="2012" name="Nat. Commun.">
        <title>Quantitative maps of protein phosphorylation sites across 14 different rat organs and tissues.</title>
        <authorList>
            <person name="Lundby A."/>
            <person name="Secher A."/>
            <person name="Lage K."/>
            <person name="Nordsborg N.B."/>
            <person name="Dmytriyev A."/>
            <person name="Lundby C."/>
            <person name="Olsen J.V."/>
        </authorList>
    </citation>
    <scope>PHOSPHORYLATION [LARGE SCALE ANALYSIS] AT SER-212; SER-259 AND SER-344</scope>
    <scope>IDENTIFICATION BY MASS SPECTROMETRY [LARGE SCALE ANALYSIS]</scope>
</reference>
<reference key="10">
    <citation type="journal article" date="2013" name="PLoS ONE">
        <title>Arginine methylation of hnRNP A2 does not directly govern its subcellular localization.</title>
        <authorList>
            <person name="Friend L.R."/>
            <person name="Landsberg M.J."/>
            <person name="Nouwens A.S."/>
            <person name="Wei Y."/>
            <person name="Rothnagel J.A."/>
            <person name="Smith R."/>
        </authorList>
    </citation>
    <scope>ACETYLATION AT MET-1</scope>
    <scope>METHYLATION AT ARG-266</scope>
    <scope>SUBCELLULAR LOCATION (ISOFORM A2)</scope>
    <scope>MUTAGENESIS OF ARG-266</scope>
</reference>
<name>ROA2_RAT</name>
<feature type="chain" id="PRO_0000365101" description="Heterogeneous nuclear ribonucleoproteins A2/B1">
    <location>
        <begin position="1"/>
        <end position="353"/>
    </location>
</feature>
<feature type="domain" description="RRM 1" evidence="4">
    <location>
        <begin position="21"/>
        <end position="104"/>
    </location>
</feature>
<feature type="domain" description="RRM 2" evidence="4">
    <location>
        <begin position="112"/>
        <end position="191"/>
    </location>
</feature>
<feature type="region of interest" description="Disordered" evidence="10">
    <location>
        <begin position="193"/>
        <end position="353"/>
    </location>
</feature>
<feature type="region of interest" description="Nuclear targeting sequence" evidence="2">
    <location>
        <begin position="308"/>
        <end position="347"/>
    </location>
</feature>
<feature type="short sequence motif" description="Nuclear localization signal" evidence="2 3">
    <location>
        <begin position="9"/>
        <end position="15"/>
    </location>
</feature>
<feature type="compositionally biased region" description="Gly residues" evidence="5">
    <location>
        <begin position="202"/>
        <end position="223"/>
    </location>
</feature>
<feature type="compositionally biased region" description="Gly residues" evidence="5">
    <location>
        <begin position="320"/>
        <end position="353"/>
    </location>
</feature>
<feature type="modified residue" description="N-acetylmethionine" evidence="10">
    <location>
        <position position="1"/>
    </location>
</feature>
<feature type="modified residue" description="Phosphothreonine" evidence="2">
    <location>
        <position position="4"/>
    </location>
</feature>
<feature type="modified residue" description="Phosphoserine" evidence="2">
    <location>
        <position position="29"/>
    </location>
</feature>
<feature type="modified residue" description="Omega-N-methylarginine" evidence="1">
    <location>
        <position position="38"/>
    </location>
</feature>
<feature type="modified residue" description="Phosphoserine" evidence="2">
    <location>
        <position position="85"/>
    </location>
</feature>
<feature type="modified residue" description="N6,N6-dimethyllysine; alternate" evidence="2">
    <location>
        <position position="104"/>
    </location>
</feature>
<feature type="modified residue" description="Phosphothreonine" evidence="2">
    <location>
        <position position="140"/>
    </location>
</feature>
<feature type="modified residue" description="Phosphoserine" evidence="2">
    <location>
        <position position="149"/>
    </location>
</feature>
<feature type="modified residue" description="Phosphothreonine" evidence="2">
    <location>
        <position position="159"/>
    </location>
</feature>
<feature type="modified residue" description="N6-acetyllysine; alternate" evidence="2">
    <location>
        <position position="168"/>
    </location>
</feature>
<feature type="modified residue" description="N6-acetyllysine; alternate" evidence="2">
    <location>
        <position position="173"/>
    </location>
</feature>
<feature type="modified residue" description="Phosphothreonine" evidence="2">
    <location>
        <position position="176"/>
    </location>
</feature>
<feature type="modified residue" description="Phosphoserine" evidence="2">
    <location>
        <position position="189"/>
    </location>
</feature>
<feature type="modified residue" description="Phosphoserine" evidence="2">
    <location>
        <position position="201"/>
    </location>
</feature>
<feature type="modified residue" description="Asymmetric dimethylarginine; alternate" evidence="1">
    <location>
        <position position="203"/>
    </location>
</feature>
<feature type="modified residue" description="Dimethylated arginine; alternate" evidence="2">
    <location>
        <position position="203"/>
    </location>
</feature>
<feature type="modified residue" description="Omega-N-methylarginine; alternate" evidence="2">
    <location>
        <position position="203"/>
    </location>
</feature>
<feature type="modified residue" description="Phosphoserine" evidence="16">
    <location>
        <position position="212"/>
    </location>
</feature>
<feature type="modified residue" description="Asymmetric dimethylarginine; alternate" evidence="1">
    <location>
        <position position="213"/>
    </location>
</feature>
<feature type="modified residue" description="Dimethylated arginine; alternate" evidence="2">
    <location>
        <position position="213"/>
    </location>
</feature>
<feature type="modified residue" description="Omega-N-methylarginine; alternate" evidence="2">
    <location>
        <position position="213"/>
    </location>
</feature>
<feature type="modified residue" description="Phosphoserine" evidence="2">
    <location>
        <position position="225"/>
    </location>
</feature>
<feature type="modified residue" description="Omega-N-methylarginine" evidence="2">
    <location>
        <position position="228"/>
    </location>
</feature>
<feature type="modified residue" description="Phosphoserine" evidence="2">
    <location>
        <position position="231"/>
    </location>
</feature>
<feature type="modified residue" description="Phosphoserine" evidence="2">
    <location>
        <position position="236"/>
    </location>
</feature>
<feature type="modified residue" description="Omega-N-methylarginine" evidence="2">
    <location>
        <position position="238"/>
    </location>
</feature>
<feature type="modified residue" description="Phosphoserine" evidence="16">
    <location>
        <position position="259"/>
    </location>
</feature>
<feature type="modified residue" description="Asymmetric dimethylarginine; alternate" evidence="10">
    <location>
        <position position="266"/>
    </location>
</feature>
<feature type="modified residue" description="Omega-N-methylarginine; alternate" evidence="2">
    <location>
        <position position="266"/>
    </location>
</feature>
<feature type="modified residue" description="Phosphoserine" evidence="2">
    <location>
        <position position="324"/>
    </location>
</feature>
<feature type="modified residue" description="Omega-N-methylarginine" evidence="2">
    <location>
        <position position="325"/>
    </location>
</feature>
<feature type="modified residue" description="Phosphotyrosine" evidence="2">
    <location>
        <position position="331"/>
    </location>
</feature>
<feature type="modified residue" description="Phosphoserine" evidence="2">
    <location>
        <position position="341"/>
    </location>
</feature>
<feature type="modified residue" description="Phosphoserine" evidence="16">
    <location>
        <position position="344"/>
    </location>
</feature>
<feature type="modified residue" description="Phosphotyrosine" evidence="2">
    <location>
        <position position="347"/>
    </location>
</feature>
<feature type="modified residue" description="Omega-N-methylarginine" evidence="2">
    <location>
        <position position="350"/>
    </location>
</feature>
<feature type="cross-link" description="Glycyl lysine isopeptide (Lys-Gly) (interchain with G-Cter in SUMO2)" evidence="2">
    <location>
        <position position="22"/>
    </location>
</feature>
<feature type="cross-link" description="Glycyl lysine isopeptide (Lys-Gly) (interchain with G-Cter in SUMO2); alternate" evidence="2">
    <location>
        <position position="104"/>
    </location>
</feature>
<feature type="cross-link" description="Glycyl lysine isopeptide (Lys-Gly) (interchain with G-Cter in SUMO2)" evidence="2">
    <location>
        <position position="112"/>
    </location>
</feature>
<feature type="cross-link" description="Glycyl lysine isopeptide (Lys-Gly) (interchain with G-Cter in SUMO2)" evidence="2">
    <location>
        <position position="120"/>
    </location>
</feature>
<feature type="cross-link" description="Glycyl lysine isopeptide (Lys-Gly) (interchain with G-Cter in SUMO2)" evidence="2">
    <location>
        <position position="137"/>
    </location>
</feature>
<feature type="cross-link" description="Glycyl lysine isopeptide (Lys-Gly) (interchain with G-Cter in SUMO2)" evidence="2">
    <location>
        <position position="152"/>
    </location>
</feature>
<feature type="cross-link" description="Glycyl lysine isopeptide (Lys-Gly) (interchain with G-Cter in SUMO2); alternate" evidence="2">
    <location>
        <position position="168"/>
    </location>
</feature>
<feature type="cross-link" description="Glycyl lysine isopeptide (Lys-Gly) (interchain with G-Cter in SUMO2); alternate" evidence="2">
    <location>
        <position position="173"/>
    </location>
</feature>
<feature type="cross-link" description="Glycyl lysine isopeptide (Lys-Gly) (interchain with G-Cter in SUMO2)" evidence="2">
    <location>
        <position position="186"/>
    </location>
</feature>
<feature type="splice variant" id="VSP_053031" description="In isoform A2 and isoform A2b." evidence="14">
    <location>
        <begin position="3"/>
        <end position="14"/>
    </location>
</feature>
<feature type="splice variant" id="VSP_053032" description="In isoform A2b and isoform B1b." evidence="14">
    <location>
        <begin position="254"/>
        <end position="293"/>
    </location>
</feature>
<feature type="mutagenesis site" description="Decreased methylation. Does not affect subcellular location." evidence="10">
    <original>R</original>
    <variation>A</variation>
    <location>
        <position position="266"/>
    </location>
</feature>
<sequence length="353" mass="37478">MEKTLETVPLERKKREKEQFRKLFIGGLSFETTEESLRNYYEQWGKLTDCVVMRDPASKRSRGFGFVTFSSMAEVDAAMAARPHSIDGRVVEPKRAVAREESGKPGAHVTVKKLFVGGIKEDTEEHHLRDYFEEYGKIDTIEIITDRQSGKKRGFGFVTFDDHDPVDKIFLQKYHTINGHNAEVRKALSRQEMQEVQSSRSGRGGNFGFGDSRGGGGNFGPGPGSNFRGGSDGYGSGRGFGDGYNGYGGGPGGGNFGGSPGYGGGRGGYGGGGPGYGNQGGGYGGGYDNYGGGNYGSGNYNDFGNYNQQPSNYGPMKSGNFGGSRNMGGPYGGGNYGPGGSGGSGGYGGRSRY</sequence>
<keyword id="KW-0007">Acetylation</keyword>
<keyword id="KW-0025">Alternative splicing</keyword>
<keyword id="KW-0963">Cytoplasm</keyword>
<keyword id="KW-0903">Direct protein sequencing</keyword>
<keyword id="KW-1017">Isopeptide bond</keyword>
<keyword id="KW-0488">Methylation</keyword>
<keyword id="KW-0507">mRNA processing</keyword>
<keyword id="KW-0508">mRNA splicing</keyword>
<keyword id="KW-0509">mRNA transport</keyword>
<keyword id="KW-0539">Nucleus</keyword>
<keyword id="KW-0597">Phosphoprotein</keyword>
<keyword id="KW-1185">Reference proteome</keyword>
<keyword id="KW-0677">Repeat</keyword>
<keyword id="KW-0687">Ribonucleoprotein</keyword>
<keyword id="KW-0694">RNA-binding</keyword>
<keyword id="KW-0964">Secreted</keyword>
<keyword id="KW-0747">Spliceosome</keyword>
<keyword id="KW-0813">Transport</keyword>
<keyword id="KW-0832">Ubl conjugation</keyword>